<evidence type="ECO:0000250" key="1">
    <source>
        <dbReference type="UniProtKB" id="P10507"/>
    </source>
</evidence>
<evidence type="ECO:0000250" key="2">
    <source>
        <dbReference type="UniProtKB" id="Q03346"/>
    </source>
</evidence>
<evidence type="ECO:0000255" key="3"/>
<evidence type="ECO:0000255" key="4">
    <source>
        <dbReference type="PROSITE-ProRule" id="PRU10096"/>
    </source>
</evidence>
<evidence type="ECO:0000305" key="5"/>
<accession>Q9P7X1</accession>
<accession>P78803</accession>
<organism>
    <name type="scientific">Schizosaccharomyces pombe (strain 972 / ATCC 24843)</name>
    <name type="common">Fission yeast</name>
    <dbReference type="NCBI Taxonomy" id="284812"/>
    <lineage>
        <taxon>Eukaryota</taxon>
        <taxon>Fungi</taxon>
        <taxon>Dikarya</taxon>
        <taxon>Ascomycota</taxon>
        <taxon>Taphrinomycotina</taxon>
        <taxon>Schizosaccharomycetes</taxon>
        <taxon>Schizosaccharomycetales</taxon>
        <taxon>Schizosaccharomycetaceae</taxon>
        <taxon>Schizosaccharomyces</taxon>
    </lineage>
</organism>
<gene>
    <name type="primary">qcr1</name>
    <name type="ORF">SPBP23A10.15c</name>
</gene>
<proteinExistence type="evidence at protein level"/>
<sequence length="457" mass="50737">MLRLQNLPKLVRRFATTALPKTETTTLKNGLTVATEHHPYAQTATVLVGVDAGSRAETAKNNGAAHFLEHLAFKGTKNRSQKALELEFENTGAHLNAYTSREQTVYYAHAFKNAVPNAVAVLADILTNSSISASAVERERQVILREQEEVDKMADEVVFDHLHATAYQGHPLGRTILGPKENIESLTREDLLQYIKDNYRSDRMIISSAGSISHEELVKLAEKYFGHLEPSAEQLSLGAPRGLKPRFVGSEIRARDDDSPTANIAIAVEGMSWKHPDYFTALVMQAIIGNWDRAMGASPHLSSRLSTIVQQHQLANSFMSFSTSYSDTGLWGIYLVTENLGRIDDLVHFTLQNWARLTVATRAEVERAKAQLRASLLLSLDSTTAIAEDIGRQLLTTGRRMSPQEVDLRIGQITEKDVARVASEMIWDKDIAVSAVGSIEGLLDYNRIRSSISMNRW</sequence>
<dbReference type="EC" id="3.4.24.64" evidence="1"/>
<dbReference type="EMBL" id="D89152">
    <property type="protein sequence ID" value="BAA13814.1"/>
    <property type="molecule type" value="mRNA"/>
</dbReference>
<dbReference type="EMBL" id="CU329671">
    <property type="protein sequence ID" value="CAB66443.1"/>
    <property type="molecule type" value="Genomic_DNA"/>
</dbReference>
<dbReference type="PIR" id="T42428">
    <property type="entry name" value="T42428"/>
</dbReference>
<dbReference type="PIR" id="T50402">
    <property type="entry name" value="T50402"/>
</dbReference>
<dbReference type="RefSeq" id="NP_595827.1">
    <property type="nucleotide sequence ID" value="NM_001021731.2"/>
</dbReference>
<dbReference type="PDB" id="8Q1B">
    <property type="method" value="EM"/>
    <property type="resolution" value="3.40 A"/>
    <property type="chains" value="A/L=1-457"/>
</dbReference>
<dbReference type="PDBsum" id="8Q1B"/>
<dbReference type="EMDB" id="EMD-18062"/>
<dbReference type="SMR" id="Q9P7X1"/>
<dbReference type="BioGRID" id="277812">
    <property type="interactions" value="2"/>
</dbReference>
<dbReference type="FunCoup" id="Q9P7X1">
    <property type="interactions" value="645"/>
</dbReference>
<dbReference type="STRING" id="284812.Q9P7X1"/>
<dbReference type="MEROPS" id="M16.003"/>
<dbReference type="iPTMnet" id="Q9P7X1"/>
<dbReference type="PaxDb" id="4896-SPBP23A10.15c.1"/>
<dbReference type="EnsemblFungi" id="SPBP23A10.15c.1">
    <property type="protein sequence ID" value="SPBP23A10.15c.1:pep"/>
    <property type="gene ID" value="SPBP23A10.15c"/>
</dbReference>
<dbReference type="GeneID" id="2541300"/>
<dbReference type="KEGG" id="spo:2541300"/>
<dbReference type="PomBase" id="SPBP23A10.15c">
    <property type="gene designation" value="qcr1"/>
</dbReference>
<dbReference type="VEuPathDB" id="FungiDB:SPBP23A10.15c"/>
<dbReference type="eggNOG" id="KOG0960">
    <property type="taxonomic scope" value="Eukaryota"/>
</dbReference>
<dbReference type="HOGENOM" id="CLU_009902_4_2_1"/>
<dbReference type="InParanoid" id="Q9P7X1"/>
<dbReference type="OMA" id="IDVVCDM"/>
<dbReference type="PhylomeDB" id="Q9P7X1"/>
<dbReference type="Reactome" id="R-SPO-611105">
    <property type="pathway name" value="Respiratory electron transport"/>
</dbReference>
<dbReference type="PRO" id="PR:Q9P7X1"/>
<dbReference type="Proteomes" id="UP000002485">
    <property type="component" value="Chromosome II"/>
</dbReference>
<dbReference type="GO" id="GO:0017087">
    <property type="term" value="C:mitochondrial processing peptidase complex"/>
    <property type="evidence" value="ECO:0000266"/>
    <property type="project" value="PomBase"/>
</dbReference>
<dbReference type="GO" id="GO:0005739">
    <property type="term" value="C:mitochondrion"/>
    <property type="evidence" value="ECO:0007005"/>
    <property type="project" value="PomBase"/>
</dbReference>
<dbReference type="GO" id="GO:0046872">
    <property type="term" value="F:metal ion binding"/>
    <property type="evidence" value="ECO:0007669"/>
    <property type="project" value="UniProtKB-KW"/>
</dbReference>
<dbReference type="GO" id="GO:0004222">
    <property type="term" value="F:metalloendopeptidase activity"/>
    <property type="evidence" value="ECO:0000266"/>
    <property type="project" value="PomBase"/>
</dbReference>
<dbReference type="GO" id="GO:0006627">
    <property type="term" value="P:protein processing involved in protein targeting to mitochondrion"/>
    <property type="evidence" value="ECO:0000266"/>
    <property type="project" value="PomBase"/>
</dbReference>
<dbReference type="FunFam" id="3.30.830.10:FF:000002">
    <property type="entry name" value="Mitochondrial-processing peptidase subunit beta"/>
    <property type="match status" value="1"/>
</dbReference>
<dbReference type="FunFam" id="3.30.830.10:FF:000001">
    <property type="entry name" value="Mitochondrial-processing peptidase subunit beta, mitochondrial"/>
    <property type="match status" value="1"/>
</dbReference>
<dbReference type="Gene3D" id="3.30.830.10">
    <property type="entry name" value="Metalloenzyme, LuxS/M16 peptidase-like"/>
    <property type="match status" value="2"/>
</dbReference>
<dbReference type="InterPro" id="IPR011249">
    <property type="entry name" value="Metalloenz_LuxS/M16"/>
</dbReference>
<dbReference type="InterPro" id="IPR050361">
    <property type="entry name" value="MPP/UQCRC_Complex"/>
</dbReference>
<dbReference type="InterPro" id="IPR011765">
    <property type="entry name" value="Pept_M16_N"/>
</dbReference>
<dbReference type="InterPro" id="IPR001431">
    <property type="entry name" value="Pept_M16_Zn_BS"/>
</dbReference>
<dbReference type="InterPro" id="IPR007863">
    <property type="entry name" value="Peptidase_M16_C"/>
</dbReference>
<dbReference type="PANTHER" id="PTHR11851:SF149">
    <property type="entry name" value="GH01077P"/>
    <property type="match status" value="1"/>
</dbReference>
<dbReference type="PANTHER" id="PTHR11851">
    <property type="entry name" value="METALLOPROTEASE"/>
    <property type="match status" value="1"/>
</dbReference>
<dbReference type="Pfam" id="PF00675">
    <property type="entry name" value="Peptidase_M16"/>
    <property type="match status" value="1"/>
</dbReference>
<dbReference type="Pfam" id="PF05193">
    <property type="entry name" value="Peptidase_M16_C"/>
    <property type="match status" value="1"/>
</dbReference>
<dbReference type="SUPFAM" id="SSF63411">
    <property type="entry name" value="LuxS/MPP-like metallohydrolase"/>
    <property type="match status" value="2"/>
</dbReference>
<dbReference type="PROSITE" id="PS00143">
    <property type="entry name" value="INSULINASE"/>
    <property type="match status" value="1"/>
</dbReference>
<comment type="function">
    <text evidence="1 2">Catalytic subunit of the essential mitochondrial processing protease (MPP), which cleaves the mitochondrial sequence off newly imported precursors proteins (By similarity). Preferentially, cleaves after an arginine at position P2 (By similarity).</text>
</comment>
<comment type="catalytic activity">
    <reaction evidence="1">
        <text>Release of N-terminal transit peptides from precursor proteins imported into the mitochondrion, typically with Arg in position P2.</text>
        <dbReference type="EC" id="3.4.24.64"/>
    </reaction>
</comment>
<comment type="cofactor">
    <cofactor evidence="1">
        <name>Zn(2+)</name>
        <dbReference type="ChEBI" id="CHEBI:29105"/>
    </cofactor>
    <text evidence="1">Binds 1 zinc ion per subunit.</text>
</comment>
<comment type="activity regulation">
    <text evidence="1">Binding to mas2 is required for catalytic activity.</text>
</comment>
<comment type="subunit">
    <text evidence="1">Heterodimer of mas2 (alpha) and qcr1 (beta) subunits, forming the mitochondrial processing protease (MPP) in which mas2 is involved in substrate recognition and binding and qcr1 is the catalytic subunit.</text>
</comment>
<comment type="subcellular location">
    <subcellularLocation>
        <location evidence="1">Mitochondrion matrix</location>
    </subcellularLocation>
</comment>
<comment type="similarity">
    <text evidence="5">Belongs to the peptidase M16 family.</text>
</comment>
<protein>
    <recommendedName>
        <fullName>Probable mitochondrial-processing peptidase subunit beta</fullName>
        <ecNumber evidence="1">3.4.24.64</ecNumber>
    </recommendedName>
    <alternativeName>
        <fullName>Beta-MPP</fullName>
    </alternativeName>
    <alternativeName>
        <fullName>PEP</fullName>
    </alternativeName>
</protein>
<reference key="1">
    <citation type="journal article" date="1997" name="DNA Res.">
        <title>Identification of open reading frames in Schizosaccharomyces pombe cDNAs.</title>
        <authorList>
            <person name="Yoshioka S."/>
            <person name="Kato K."/>
            <person name="Nakai K."/>
            <person name="Okayama H."/>
            <person name="Nojima H."/>
        </authorList>
    </citation>
    <scope>NUCLEOTIDE SEQUENCE [LARGE SCALE MRNA]</scope>
    <source>
        <strain>PR745</strain>
    </source>
</reference>
<reference key="2">
    <citation type="journal article" date="2002" name="Nature">
        <title>The genome sequence of Schizosaccharomyces pombe.</title>
        <authorList>
            <person name="Wood V."/>
            <person name="Gwilliam R."/>
            <person name="Rajandream M.A."/>
            <person name="Lyne M.H."/>
            <person name="Lyne R."/>
            <person name="Stewart A."/>
            <person name="Sgouros J.G."/>
            <person name="Peat N."/>
            <person name="Hayles J."/>
            <person name="Baker S.G."/>
            <person name="Basham D."/>
            <person name="Bowman S."/>
            <person name="Brooks K."/>
            <person name="Brown D."/>
            <person name="Brown S."/>
            <person name="Chillingworth T."/>
            <person name="Churcher C.M."/>
            <person name="Collins M."/>
            <person name="Connor R."/>
            <person name="Cronin A."/>
            <person name="Davis P."/>
            <person name="Feltwell T."/>
            <person name="Fraser A."/>
            <person name="Gentles S."/>
            <person name="Goble A."/>
            <person name="Hamlin N."/>
            <person name="Harris D.E."/>
            <person name="Hidalgo J."/>
            <person name="Hodgson G."/>
            <person name="Holroyd S."/>
            <person name="Hornsby T."/>
            <person name="Howarth S."/>
            <person name="Huckle E.J."/>
            <person name="Hunt S."/>
            <person name="Jagels K."/>
            <person name="James K.D."/>
            <person name="Jones L."/>
            <person name="Jones M."/>
            <person name="Leather S."/>
            <person name="McDonald S."/>
            <person name="McLean J."/>
            <person name="Mooney P."/>
            <person name="Moule S."/>
            <person name="Mungall K.L."/>
            <person name="Murphy L.D."/>
            <person name="Niblett D."/>
            <person name="Odell C."/>
            <person name="Oliver K."/>
            <person name="O'Neil S."/>
            <person name="Pearson D."/>
            <person name="Quail M.A."/>
            <person name="Rabbinowitsch E."/>
            <person name="Rutherford K.M."/>
            <person name="Rutter S."/>
            <person name="Saunders D."/>
            <person name="Seeger K."/>
            <person name="Sharp S."/>
            <person name="Skelton J."/>
            <person name="Simmonds M.N."/>
            <person name="Squares R."/>
            <person name="Squares S."/>
            <person name="Stevens K."/>
            <person name="Taylor K."/>
            <person name="Taylor R.G."/>
            <person name="Tivey A."/>
            <person name="Walsh S.V."/>
            <person name="Warren T."/>
            <person name="Whitehead S."/>
            <person name="Woodward J.R."/>
            <person name="Volckaert G."/>
            <person name="Aert R."/>
            <person name="Robben J."/>
            <person name="Grymonprez B."/>
            <person name="Weltjens I."/>
            <person name="Vanstreels E."/>
            <person name="Rieger M."/>
            <person name="Schaefer M."/>
            <person name="Mueller-Auer S."/>
            <person name="Gabel C."/>
            <person name="Fuchs M."/>
            <person name="Duesterhoeft A."/>
            <person name="Fritzc C."/>
            <person name="Holzer E."/>
            <person name="Moestl D."/>
            <person name="Hilbert H."/>
            <person name="Borzym K."/>
            <person name="Langer I."/>
            <person name="Beck A."/>
            <person name="Lehrach H."/>
            <person name="Reinhardt R."/>
            <person name="Pohl T.M."/>
            <person name="Eger P."/>
            <person name="Zimmermann W."/>
            <person name="Wedler H."/>
            <person name="Wambutt R."/>
            <person name="Purnelle B."/>
            <person name="Goffeau A."/>
            <person name="Cadieu E."/>
            <person name="Dreano S."/>
            <person name="Gloux S."/>
            <person name="Lelaure V."/>
            <person name="Mottier S."/>
            <person name="Galibert F."/>
            <person name="Aves S.J."/>
            <person name="Xiang Z."/>
            <person name="Hunt C."/>
            <person name="Moore K."/>
            <person name="Hurst S.M."/>
            <person name="Lucas M."/>
            <person name="Rochet M."/>
            <person name="Gaillardin C."/>
            <person name="Tallada V.A."/>
            <person name="Garzon A."/>
            <person name="Thode G."/>
            <person name="Daga R.R."/>
            <person name="Cruzado L."/>
            <person name="Jimenez J."/>
            <person name="Sanchez M."/>
            <person name="del Rey F."/>
            <person name="Benito J."/>
            <person name="Dominguez A."/>
            <person name="Revuelta J.L."/>
            <person name="Moreno S."/>
            <person name="Armstrong J."/>
            <person name="Forsburg S.L."/>
            <person name="Cerutti L."/>
            <person name="Lowe T."/>
            <person name="McCombie W.R."/>
            <person name="Paulsen I."/>
            <person name="Potashkin J."/>
            <person name="Shpakovski G.V."/>
            <person name="Ussery D."/>
            <person name="Barrell B.G."/>
            <person name="Nurse P."/>
        </authorList>
    </citation>
    <scope>NUCLEOTIDE SEQUENCE [LARGE SCALE GENOMIC DNA]</scope>
    <source>
        <strain>972 / ATCC 24843</strain>
    </source>
</reference>
<name>MPPB_SCHPO</name>
<feature type="transit peptide" description="Mitochondrion" evidence="3">
    <location>
        <begin position="1"/>
        <end status="unknown"/>
    </location>
</feature>
<feature type="chain" id="PRO_0000026783" description="Probable mitochondrial-processing peptidase subunit beta">
    <location>
        <begin status="unknown"/>
        <end position="457"/>
    </location>
</feature>
<feature type="active site" description="Proton acceptor" evidence="4">
    <location>
        <position position="69"/>
    </location>
</feature>
<feature type="binding site" evidence="4">
    <location>
        <position position="66"/>
    </location>
    <ligand>
        <name>Zn(2+)</name>
        <dbReference type="ChEBI" id="CHEBI:29105"/>
    </ligand>
</feature>
<feature type="binding site" evidence="4">
    <location>
        <position position="70"/>
    </location>
    <ligand>
        <name>Zn(2+)</name>
        <dbReference type="ChEBI" id="CHEBI:29105"/>
    </ligand>
</feature>
<feature type="binding site" evidence="4">
    <location>
        <position position="146"/>
    </location>
    <ligand>
        <name>Zn(2+)</name>
        <dbReference type="ChEBI" id="CHEBI:29105"/>
    </ligand>
</feature>
<feature type="sequence conflict" description="In Ref. 1; BAA13814." evidence="5" ref="1">
    <original>E</original>
    <variation>G</variation>
    <location>
        <position position="89"/>
    </location>
</feature>
<feature type="sequence conflict" description="In Ref. 1; BAA13814." evidence="5" ref="1">
    <original>FK</original>
    <variation>PQ</variation>
    <location>
        <begin position="111"/>
        <end position="112"/>
    </location>
</feature>
<feature type="sequence conflict" description="In Ref. 1; BAA13814." evidence="5" ref="1">
    <original>N</original>
    <variation>H</variation>
    <location>
        <position position="117"/>
    </location>
</feature>
<feature type="sequence conflict" description="In Ref. 1; BAA13814." evidence="5" ref="1">
    <original>NRIRSSISMNRW</original>
    <variation>TVFVAVFL</variation>
    <location>
        <begin position="446"/>
        <end position="457"/>
    </location>
</feature>
<keyword id="KW-0002">3D-structure</keyword>
<keyword id="KW-0378">Hydrolase</keyword>
<keyword id="KW-0479">Metal-binding</keyword>
<keyword id="KW-0482">Metalloprotease</keyword>
<keyword id="KW-0496">Mitochondrion</keyword>
<keyword id="KW-0645">Protease</keyword>
<keyword id="KW-1185">Reference proteome</keyword>
<keyword id="KW-0809">Transit peptide</keyword>
<keyword id="KW-0862">Zinc</keyword>